<protein>
    <recommendedName>
        <fullName evidence="1">Large ribosomal subunit protein uL2</fullName>
    </recommendedName>
    <alternativeName>
        <fullName evidence="3">50S ribosomal protein L2</fullName>
    </alternativeName>
</protein>
<keyword id="KW-1185">Reference proteome</keyword>
<keyword id="KW-0687">Ribonucleoprotein</keyword>
<keyword id="KW-0689">Ribosomal protein</keyword>
<keyword id="KW-0694">RNA-binding</keyword>
<keyword id="KW-0699">rRNA-binding</keyword>
<evidence type="ECO:0000255" key="1">
    <source>
        <dbReference type="HAMAP-Rule" id="MF_01320"/>
    </source>
</evidence>
<evidence type="ECO:0000256" key="2">
    <source>
        <dbReference type="SAM" id="MobiDB-lite"/>
    </source>
</evidence>
<evidence type="ECO:0000305" key="3"/>
<dbReference type="EMBL" id="AE017263">
    <property type="protein sequence ID" value="AAT75482.1"/>
    <property type="molecule type" value="Genomic_DNA"/>
</dbReference>
<dbReference type="RefSeq" id="WP_011183023.1">
    <property type="nucleotide sequence ID" value="NC_006055.1"/>
</dbReference>
<dbReference type="RefSeq" id="YP_053366.1">
    <property type="nucleotide sequence ID" value="NC_006055.1"/>
</dbReference>
<dbReference type="SMR" id="Q6F1Z1"/>
<dbReference type="STRING" id="265311.Mfl126"/>
<dbReference type="PaxDb" id="265311-Mfl126"/>
<dbReference type="EnsemblBacteria" id="AAT75482">
    <property type="protein sequence ID" value="AAT75482"/>
    <property type="gene ID" value="Mfl126"/>
</dbReference>
<dbReference type="GeneID" id="2898237"/>
<dbReference type="KEGG" id="mfl:Mfl126"/>
<dbReference type="PATRIC" id="fig|265311.5.peg.127"/>
<dbReference type="eggNOG" id="COG0090">
    <property type="taxonomic scope" value="Bacteria"/>
</dbReference>
<dbReference type="HOGENOM" id="CLU_036235_2_1_14"/>
<dbReference type="OrthoDB" id="9778722at2"/>
<dbReference type="Proteomes" id="UP000006647">
    <property type="component" value="Chromosome"/>
</dbReference>
<dbReference type="GO" id="GO:0015934">
    <property type="term" value="C:large ribosomal subunit"/>
    <property type="evidence" value="ECO:0007669"/>
    <property type="project" value="InterPro"/>
</dbReference>
<dbReference type="GO" id="GO:0019843">
    <property type="term" value="F:rRNA binding"/>
    <property type="evidence" value="ECO:0007669"/>
    <property type="project" value="UniProtKB-UniRule"/>
</dbReference>
<dbReference type="GO" id="GO:0003735">
    <property type="term" value="F:structural constituent of ribosome"/>
    <property type="evidence" value="ECO:0007669"/>
    <property type="project" value="InterPro"/>
</dbReference>
<dbReference type="GO" id="GO:0016740">
    <property type="term" value="F:transferase activity"/>
    <property type="evidence" value="ECO:0007669"/>
    <property type="project" value="InterPro"/>
</dbReference>
<dbReference type="GO" id="GO:0002181">
    <property type="term" value="P:cytoplasmic translation"/>
    <property type="evidence" value="ECO:0007669"/>
    <property type="project" value="TreeGrafter"/>
</dbReference>
<dbReference type="FunFam" id="2.30.30.30:FF:000001">
    <property type="entry name" value="50S ribosomal protein L2"/>
    <property type="match status" value="1"/>
</dbReference>
<dbReference type="FunFam" id="2.40.50.140:FF:000003">
    <property type="entry name" value="50S ribosomal protein L2"/>
    <property type="match status" value="1"/>
</dbReference>
<dbReference type="FunFam" id="4.10.950.10:FF:000001">
    <property type="entry name" value="50S ribosomal protein L2"/>
    <property type="match status" value="1"/>
</dbReference>
<dbReference type="Gene3D" id="2.30.30.30">
    <property type="match status" value="1"/>
</dbReference>
<dbReference type="Gene3D" id="2.40.50.140">
    <property type="entry name" value="Nucleic acid-binding proteins"/>
    <property type="match status" value="1"/>
</dbReference>
<dbReference type="Gene3D" id="4.10.950.10">
    <property type="entry name" value="Ribosomal protein L2, domain 3"/>
    <property type="match status" value="1"/>
</dbReference>
<dbReference type="HAMAP" id="MF_01320_B">
    <property type="entry name" value="Ribosomal_uL2_B"/>
    <property type="match status" value="1"/>
</dbReference>
<dbReference type="InterPro" id="IPR012340">
    <property type="entry name" value="NA-bd_OB-fold"/>
</dbReference>
<dbReference type="InterPro" id="IPR014722">
    <property type="entry name" value="Rib_uL2_dom2"/>
</dbReference>
<dbReference type="InterPro" id="IPR002171">
    <property type="entry name" value="Ribosomal_uL2"/>
</dbReference>
<dbReference type="InterPro" id="IPR005880">
    <property type="entry name" value="Ribosomal_uL2_bac/org-type"/>
</dbReference>
<dbReference type="InterPro" id="IPR022669">
    <property type="entry name" value="Ribosomal_uL2_C"/>
</dbReference>
<dbReference type="InterPro" id="IPR022671">
    <property type="entry name" value="Ribosomal_uL2_CS"/>
</dbReference>
<dbReference type="InterPro" id="IPR014726">
    <property type="entry name" value="Ribosomal_uL2_dom3"/>
</dbReference>
<dbReference type="InterPro" id="IPR022666">
    <property type="entry name" value="Ribosomal_uL2_RNA-bd_dom"/>
</dbReference>
<dbReference type="InterPro" id="IPR008991">
    <property type="entry name" value="Translation_prot_SH3-like_sf"/>
</dbReference>
<dbReference type="NCBIfam" id="TIGR01171">
    <property type="entry name" value="rplB_bact"/>
    <property type="match status" value="1"/>
</dbReference>
<dbReference type="PANTHER" id="PTHR13691:SF5">
    <property type="entry name" value="LARGE RIBOSOMAL SUBUNIT PROTEIN UL2M"/>
    <property type="match status" value="1"/>
</dbReference>
<dbReference type="PANTHER" id="PTHR13691">
    <property type="entry name" value="RIBOSOMAL PROTEIN L2"/>
    <property type="match status" value="1"/>
</dbReference>
<dbReference type="Pfam" id="PF00181">
    <property type="entry name" value="Ribosomal_L2"/>
    <property type="match status" value="1"/>
</dbReference>
<dbReference type="Pfam" id="PF03947">
    <property type="entry name" value="Ribosomal_L2_C"/>
    <property type="match status" value="1"/>
</dbReference>
<dbReference type="PIRSF" id="PIRSF002158">
    <property type="entry name" value="Ribosomal_L2"/>
    <property type="match status" value="1"/>
</dbReference>
<dbReference type="SMART" id="SM01383">
    <property type="entry name" value="Ribosomal_L2"/>
    <property type="match status" value="1"/>
</dbReference>
<dbReference type="SMART" id="SM01382">
    <property type="entry name" value="Ribosomal_L2_C"/>
    <property type="match status" value="1"/>
</dbReference>
<dbReference type="SUPFAM" id="SSF50249">
    <property type="entry name" value="Nucleic acid-binding proteins"/>
    <property type="match status" value="1"/>
</dbReference>
<dbReference type="SUPFAM" id="SSF50104">
    <property type="entry name" value="Translation proteins SH3-like domain"/>
    <property type="match status" value="1"/>
</dbReference>
<dbReference type="PROSITE" id="PS00467">
    <property type="entry name" value="RIBOSOMAL_L2"/>
    <property type="match status" value="1"/>
</dbReference>
<organism>
    <name type="scientific">Mesoplasma florum (strain ATCC 33453 / NBRC 100688 / NCTC 11704 / L1)</name>
    <name type="common">Acholeplasma florum</name>
    <dbReference type="NCBI Taxonomy" id="265311"/>
    <lineage>
        <taxon>Bacteria</taxon>
        <taxon>Bacillati</taxon>
        <taxon>Mycoplasmatota</taxon>
        <taxon>Mollicutes</taxon>
        <taxon>Entomoplasmatales</taxon>
        <taxon>Entomoplasmataceae</taxon>
        <taxon>Mesoplasma</taxon>
    </lineage>
</organism>
<name>RL2_MESFL</name>
<accession>Q6F1Z1</accession>
<feature type="chain" id="PRO_0000237204" description="Large ribosomal subunit protein uL2">
    <location>
        <begin position="1"/>
        <end position="281"/>
    </location>
</feature>
<feature type="region of interest" description="Disordered" evidence="2">
    <location>
        <begin position="222"/>
        <end position="281"/>
    </location>
</feature>
<comment type="function">
    <text evidence="1">One of the primary rRNA binding proteins. Required for association of the 30S and 50S subunits to form the 70S ribosome, for tRNA binding and peptide bond formation. It has been suggested to have peptidyltransferase activity; this is somewhat controversial. Makes several contacts with the 16S rRNA in the 70S ribosome.</text>
</comment>
<comment type="subunit">
    <text evidence="1">Part of the 50S ribosomal subunit. Forms a bridge to the 30S subunit in the 70S ribosome.</text>
</comment>
<comment type="similarity">
    <text evidence="1">Belongs to the universal ribosomal protein uL2 family.</text>
</comment>
<proteinExistence type="inferred from homology"/>
<reference key="1">
    <citation type="submission" date="2004-06" db="EMBL/GenBank/DDBJ databases">
        <authorList>
            <person name="Birren B.W."/>
            <person name="Stange-Thomann N."/>
            <person name="Hafez N."/>
            <person name="DeCaprio D."/>
            <person name="Fisher S."/>
            <person name="Butler J."/>
            <person name="Elkins T."/>
            <person name="Kodira C.D."/>
            <person name="Major J."/>
            <person name="Wang S."/>
            <person name="Nicol R."/>
            <person name="Nusbaum C."/>
        </authorList>
    </citation>
    <scope>NUCLEOTIDE SEQUENCE [LARGE SCALE GENOMIC DNA]</scope>
    <source>
        <strain>ATCC 33453 / NBRC 100688 / NCTC 11704 / L1</strain>
    </source>
</reference>
<gene>
    <name evidence="1" type="primary">rplB</name>
    <name type="ordered locus">Mfl126</name>
</gene>
<sequence>MAIKKYKPTTNGRRNMTSIDYKATLTTSTPEKSLLAAKNSKAGRNNRGLITTRHKGGGHKQKYRIIDFKRNKRDVVGTIATIEYDPNRNAFICLVNYLDGEKRYILFAKGMTVGMKIVASEHADIKVGNAAPLKNIPEGTLIHNVELKPGKGGQMARSAGTSVQILGKDDDGKYVTLRLTSGEVRKVLADCYATIGEVGNEEYNLVNWGKAGRNRWRGIRPTVRGSVMNPNDHPHGGGEGRTPIGRKSPVTPWGKKALGVKTRNTKKPSEKLIVRKRNAKK</sequence>